<protein>
    <recommendedName>
        <fullName>Enolase</fullName>
        <ecNumber>4.2.1.11</ecNumber>
    </recommendedName>
    <alternativeName>
        <fullName>2-phospho-D-glycerate hydro-lyase</fullName>
    </alternativeName>
    <alternativeName>
        <fullName>2-phosphoglycerate dehydratase</fullName>
    </alternativeName>
</protein>
<evidence type="ECO:0000250" key="1"/>
<evidence type="ECO:0000305" key="2"/>
<comment type="catalytic activity">
    <reaction>
        <text>(2R)-2-phosphoglycerate = phosphoenolpyruvate + H2O</text>
        <dbReference type="Rhea" id="RHEA:10164"/>
        <dbReference type="ChEBI" id="CHEBI:15377"/>
        <dbReference type="ChEBI" id="CHEBI:58289"/>
        <dbReference type="ChEBI" id="CHEBI:58702"/>
        <dbReference type="EC" id="4.2.1.11"/>
    </reaction>
</comment>
<comment type="cofactor">
    <cofactor evidence="1">
        <name>Mg(2+)</name>
        <dbReference type="ChEBI" id="CHEBI:18420"/>
    </cofactor>
    <text evidence="1">Mg(2+) is required for catalysis and for stabilizing the dimer.</text>
</comment>
<comment type="pathway">
    <text>Carbohydrate degradation; glycolysis; pyruvate from D-glyceraldehyde 3-phosphate: step 4/5.</text>
</comment>
<comment type="subunit">
    <text evidence="1">Homodimer.</text>
</comment>
<comment type="subcellular location">
    <subcellularLocation>
        <location evidence="1">Cytoplasm</location>
    </subcellularLocation>
</comment>
<comment type="similarity">
    <text evidence="2">Belongs to the enolase family.</text>
</comment>
<name>ENO_EREGS</name>
<gene>
    <name type="primary">ENO</name>
    <name type="ordered locus">AER294C</name>
</gene>
<organism>
    <name type="scientific">Eremothecium gossypii (strain ATCC 10895 / CBS 109.51 / FGSC 9923 / NRRL Y-1056)</name>
    <name type="common">Yeast</name>
    <name type="synonym">Ashbya gossypii</name>
    <dbReference type="NCBI Taxonomy" id="284811"/>
    <lineage>
        <taxon>Eukaryota</taxon>
        <taxon>Fungi</taxon>
        <taxon>Dikarya</taxon>
        <taxon>Ascomycota</taxon>
        <taxon>Saccharomycotina</taxon>
        <taxon>Saccharomycetes</taxon>
        <taxon>Saccharomycetales</taxon>
        <taxon>Saccharomycetaceae</taxon>
        <taxon>Eremothecium</taxon>
    </lineage>
</organism>
<proteinExistence type="inferred from homology"/>
<keyword id="KW-0963">Cytoplasm</keyword>
<keyword id="KW-0324">Glycolysis</keyword>
<keyword id="KW-0456">Lyase</keyword>
<keyword id="KW-0460">Magnesium</keyword>
<keyword id="KW-0479">Metal-binding</keyword>
<keyword id="KW-1185">Reference proteome</keyword>
<dbReference type="EC" id="4.2.1.11"/>
<dbReference type="EMBL" id="AE016818">
    <property type="protein sequence ID" value="AAS52975.1"/>
    <property type="molecule type" value="Genomic_DNA"/>
</dbReference>
<dbReference type="RefSeq" id="NP_985151.1">
    <property type="nucleotide sequence ID" value="NM_210505.1"/>
</dbReference>
<dbReference type="SMR" id="Q756H2"/>
<dbReference type="FunCoup" id="Q756H2">
    <property type="interactions" value="1294"/>
</dbReference>
<dbReference type="STRING" id="284811.Q756H2"/>
<dbReference type="EnsemblFungi" id="AAS52975">
    <property type="protein sequence ID" value="AAS52975"/>
    <property type="gene ID" value="AGOS_AER294C"/>
</dbReference>
<dbReference type="GeneID" id="4621364"/>
<dbReference type="KEGG" id="ago:AGOS_AER294C"/>
<dbReference type="eggNOG" id="KOG2670">
    <property type="taxonomic scope" value="Eukaryota"/>
</dbReference>
<dbReference type="HOGENOM" id="CLU_031223_0_0_1"/>
<dbReference type="InParanoid" id="Q756H2"/>
<dbReference type="OMA" id="RCMMSHR"/>
<dbReference type="OrthoDB" id="1739814at2759"/>
<dbReference type="UniPathway" id="UPA00109">
    <property type="reaction ID" value="UER00187"/>
</dbReference>
<dbReference type="Proteomes" id="UP000000591">
    <property type="component" value="Chromosome V"/>
</dbReference>
<dbReference type="GO" id="GO:0000015">
    <property type="term" value="C:phosphopyruvate hydratase complex"/>
    <property type="evidence" value="ECO:0000318"/>
    <property type="project" value="GO_Central"/>
</dbReference>
<dbReference type="GO" id="GO:0000287">
    <property type="term" value="F:magnesium ion binding"/>
    <property type="evidence" value="ECO:0007669"/>
    <property type="project" value="InterPro"/>
</dbReference>
<dbReference type="GO" id="GO:0004634">
    <property type="term" value="F:phosphopyruvate hydratase activity"/>
    <property type="evidence" value="ECO:0000318"/>
    <property type="project" value="GO_Central"/>
</dbReference>
<dbReference type="GO" id="GO:0006096">
    <property type="term" value="P:glycolytic process"/>
    <property type="evidence" value="ECO:0000318"/>
    <property type="project" value="GO_Central"/>
</dbReference>
<dbReference type="CDD" id="cd03313">
    <property type="entry name" value="enolase"/>
    <property type="match status" value="1"/>
</dbReference>
<dbReference type="FunFam" id="3.30.390.10:FF:000001">
    <property type="entry name" value="Enolase"/>
    <property type="match status" value="1"/>
</dbReference>
<dbReference type="FunFam" id="3.20.20.120:FF:000002">
    <property type="entry name" value="Enolase 1"/>
    <property type="match status" value="1"/>
</dbReference>
<dbReference type="Gene3D" id="3.20.20.120">
    <property type="entry name" value="Enolase-like C-terminal domain"/>
    <property type="match status" value="1"/>
</dbReference>
<dbReference type="Gene3D" id="3.30.390.10">
    <property type="entry name" value="Enolase-like, N-terminal domain"/>
    <property type="match status" value="1"/>
</dbReference>
<dbReference type="HAMAP" id="MF_00318">
    <property type="entry name" value="Enolase"/>
    <property type="match status" value="1"/>
</dbReference>
<dbReference type="InterPro" id="IPR000941">
    <property type="entry name" value="Enolase"/>
</dbReference>
<dbReference type="InterPro" id="IPR036849">
    <property type="entry name" value="Enolase-like_C_sf"/>
</dbReference>
<dbReference type="InterPro" id="IPR029017">
    <property type="entry name" value="Enolase-like_N"/>
</dbReference>
<dbReference type="InterPro" id="IPR020810">
    <property type="entry name" value="Enolase_C"/>
</dbReference>
<dbReference type="InterPro" id="IPR020809">
    <property type="entry name" value="Enolase_CS"/>
</dbReference>
<dbReference type="InterPro" id="IPR020811">
    <property type="entry name" value="Enolase_N"/>
</dbReference>
<dbReference type="NCBIfam" id="TIGR01060">
    <property type="entry name" value="eno"/>
    <property type="match status" value="1"/>
</dbReference>
<dbReference type="PANTHER" id="PTHR11902">
    <property type="entry name" value="ENOLASE"/>
    <property type="match status" value="1"/>
</dbReference>
<dbReference type="PANTHER" id="PTHR11902:SF1">
    <property type="entry name" value="ENOLASE"/>
    <property type="match status" value="1"/>
</dbReference>
<dbReference type="Pfam" id="PF00113">
    <property type="entry name" value="Enolase_C"/>
    <property type="match status" value="1"/>
</dbReference>
<dbReference type="Pfam" id="PF03952">
    <property type="entry name" value="Enolase_N"/>
    <property type="match status" value="1"/>
</dbReference>
<dbReference type="PIRSF" id="PIRSF001400">
    <property type="entry name" value="Enolase"/>
    <property type="match status" value="1"/>
</dbReference>
<dbReference type="PRINTS" id="PR00148">
    <property type="entry name" value="ENOLASE"/>
</dbReference>
<dbReference type="SFLD" id="SFLDS00001">
    <property type="entry name" value="Enolase"/>
    <property type="match status" value="1"/>
</dbReference>
<dbReference type="SFLD" id="SFLDF00002">
    <property type="entry name" value="enolase"/>
    <property type="match status" value="1"/>
</dbReference>
<dbReference type="SMART" id="SM01192">
    <property type="entry name" value="Enolase_C"/>
    <property type="match status" value="1"/>
</dbReference>
<dbReference type="SMART" id="SM01193">
    <property type="entry name" value="Enolase_N"/>
    <property type="match status" value="1"/>
</dbReference>
<dbReference type="SUPFAM" id="SSF51604">
    <property type="entry name" value="Enolase C-terminal domain-like"/>
    <property type="match status" value="1"/>
</dbReference>
<dbReference type="SUPFAM" id="SSF54826">
    <property type="entry name" value="Enolase N-terminal domain-like"/>
    <property type="match status" value="1"/>
</dbReference>
<dbReference type="PROSITE" id="PS00164">
    <property type="entry name" value="ENOLASE"/>
    <property type="match status" value="1"/>
</dbReference>
<accession>Q756H2</accession>
<sequence>MAISKVYARSVYDSRGNPTVEVEVTTENGTFRSIVPSGASTGVHEALELRDGDKSKWLGKGVTKAVSNVNDIIAPALLSANVDVKDQKAVDALMLTLDGTPNKSKLGANAILGVSMAVAKAAAAEKKVPLYQHLADLAGSSTTPFVLPVPFLNVLNGGSHAGGALALQEFMIAPTGAESFSEALRMGSEVYHNLKSLTKKRYGASAGNVGDEGGVAPNIQTAEEALDLIVDAIKAAGYEGKIDIALDCASSEFFKDGKYDLDFKNPESDSSKWLSGQELADLYKKLVEKYPIVSIEDPFAEDDWEAWSHFYKNAGVQIVADDLTVTNPTRIATAIQKKAADALLLKVNQIGSLTESIQAAKDSFDATWGVMVSHRSGETEDTFIADLVVGLRTGQIKTGAPARSERLAKLNQLLRIEEELGSKAIYAGKKFHNANKL</sequence>
<feature type="chain" id="PRO_0000134040" description="Enolase">
    <location>
        <begin position="1"/>
        <end position="437"/>
    </location>
</feature>
<feature type="active site" description="Proton donor" evidence="1">
    <location>
        <position position="212"/>
    </location>
</feature>
<feature type="active site" description="Proton acceptor" evidence="1">
    <location>
        <position position="346"/>
    </location>
</feature>
<feature type="binding site" evidence="1">
    <location>
        <position position="160"/>
    </location>
    <ligand>
        <name>substrate</name>
    </ligand>
</feature>
<feature type="binding site" evidence="1">
    <location>
        <position position="169"/>
    </location>
    <ligand>
        <name>substrate</name>
    </ligand>
</feature>
<feature type="binding site" evidence="1">
    <location>
        <position position="247"/>
    </location>
    <ligand>
        <name>Mg(2+)</name>
        <dbReference type="ChEBI" id="CHEBI:18420"/>
    </ligand>
</feature>
<feature type="binding site" evidence="1">
    <location>
        <position position="296"/>
    </location>
    <ligand>
        <name>Mg(2+)</name>
        <dbReference type="ChEBI" id="CHEBI:18420"/>
    </ligand>
</feature>
<feature type="binding site" evidence="1">
    <location>
        <position position="296"/>
    </location>
    <ligand>
        <name>substrate</name>
    </ligand>
</feature>
<feature type="binding site" evidence="1">
    <location>
        <position position="321"/>
    </location>
    <ligand>
        <name>Mg(2+)</name>
        <dbReference type="ChEBI" id="CHEBI:18420"/>
    </ligand>
</feature>
<feature type="binding site" evidence="1">
    <location>
        <position position="321"/>
    </location>
    <ligand>
        <name>substrate</name>
    </ligand>
</feature>
<feature type="binding site" evidence="1">
    <location>
        <begin position="373"/>
        <end position="376"/>
    </location>
    <ligand>
        <name>substrate</name>
    </ligand>
</feature>
<feature type="binding site" evidence="1">
    <location>
        <position position="397"/>
    </location>
    <ligand>
        <name>substrate</name>
    </ligand>
</feature>
<reference key="1">
    <citation type="journal article" date="2004" name="Science">
        <title>The Ashbya gossypii genome as a tool for mapping the ancient Saccharomyces cerevisiae genome.</title>
        <authorList>
            <person name="Dietrich F.S."/>
            <person name="Voegeli S."/>
            <person name="Brachat S."/>
            <person name="Lerch A."/>
            <person name="Gates K."/>
            <person name="Steiner S."/>
            <person name="Mohr C."/>
            <person name="Poehlmann R."/>
            <person name="Luedi P."/>
            <person name="Choi S."/>
            <person name="Wing R.A."/>
            <person name="Flavier A."/>
            <person name="Gaffney T.D."/>
            <person name="Philippsen P."/>
        </authorList>
    </citation>
    <scope>NUCLEOTIDE SEQUENCE [LARGE SCALE GENOMIC DNA]</scope>
    <source>
        <strain>ATCC 10895 / CBS 109.51 / FGSC 9923 / NRRL Y-1056</strain>
    </source>
</reference>
<reference key="2">
    <citation type="journal article" date="2013" name="G3 (Bethesda)">
        <title>Genomes of Ashbya fungi isolated from insects reveal four mating-type loci, numerous translocations, lack of transposons, and distinct gene duplications.</title>
        <authorList>
            <person name="Dietrich F.S."/>
            <person name="Voegeli S."/>
            <person name="Kuo S."/>
            <person name="Philippsen P."/>
        </authorList>
    </citation>
    <scope>GENOME REANNOTATION</scope>
    <source>
        <strain>ATCC 10895 / CBS 109.51 / FGSC 9923 / NRRL Y-1056</strain>
    </source>
</reference>